<name>YXIF_BACSU</name>
<proteinExistence type="predicted"/>
<organism>
    <name type="scientific">Bacillus subtilis (strain 168)</name>
    <dbReference type="NCBI Taxonomy" id="224308"/>
    <lineage>
        <taxon>Bacteria</taxon>
        <taxon>Bacillati</taxon>
        <taxon>Bacillota</taxon>
        <taxon>Bacilli</taxon>
        <taxon>Bacillales</taxon>
        <taxon>Bacillaceae</taxon>
        <taxon>Bacillus</taxon>
    </lineage>
</organism>
<protein>
    <recommendedName>
        <fullName>Uncharacterized protein YxiF</fullName>
    </recommendedName>
</protein>
<sequence>MQKRLIEKLAENKRRLLMSEIKEKLVPCAERGFTYRFADLAQSRQLLELVLSNSIPANTREVDALEKTEAKQLIWKISQSYVAYDDRDVLLFHQYSSEIGALVCSFGKCLEHLDCLLECIEFDEGILNHSFILVEPKCQFGLCILHTEYGCELVYW</sequence>
<gene>
    <name type="primary">yxiF</name>
    <name type="ordered locus">BSU39210</name>
    <name type="ORF">N17I</name>
</gene>
<keyword id="KW-1185">Reference proteome</keyword>
<reference key="1">
    <citation type="journal article" date="1995" name="Microbiology">
        <title>Cloning and sequencing of a 29 kb region of the Bacillus subtilis genome containing the hut and wapA loci.</title>
        <authorList>
            <person name="Yoshida K."/>
            <person name="Sano H."/>
            <person name="Seki S."/>
            <person name="Oda M."/>
            <person name="Fujimura M."/>
            <person name="Fujita Y."/>
        </authorList>
    </citation>
    <scope>NUCLEOTIDE SEQUENCE [GENOMIC DNA]</scope>
    <source>
        <strain>168 / BGSC1A1</strain>
    </source>
</reference>
<reference key="2">
    <citation type="journal article" date="1996" name="Microbiology">
        <title>Sequencing of a 65 kb region of the Bacillus subtilis genome containing the lic and cel loci, and creation of a 177 kb contig covering the gnt-sacXY region.</title>
        <authorList>
            <person name="Yoshida K."/>
            <person name="Shindo K."/>
            <person name="Sano H."/>
            <person name="Seki S."/>
            <person name="Fujimura M."/>
            <person name="Yanai N."/>
            <person name="Miwa Y."/>
            <person name="Fujita Y."/>
        </authorList>
    </citation>
    <scope>NUCLEOTIDE SEQUENCE [GENOMIC DNA]</scope>
    <source>
        <strain>168 / BGSC1A1</strain>
    </source>
</reference>
<reference key="3">
    <citation type="journal article" date="1997" name="Nature">
        <title>The complete genome sequence of the Gram-positive bacterium Bacillus subtilis.</title>
        <authorList>
            <person name="Kunst F."/>
            <person name="Ogasawara N."/>
            <person name="Moszer I."/>
            <person name="Albertini A.M."/>
            <person name="Alloni G."/>
            <person name="Azevedo V."/>
            <person name="Bertero M.G."/>
            <person name="Bessieres P."/>
            <person name="Bolotin A."/>
            <person name="Borchert S."/>
            <person name="Borriss R."/>
            <person name="Boursier L."/>
            <person name="Brans A."/>
            <person name="Braun M."/>
            <person name="Brignell S.C."/>
            <person name="Bron S."/>
            <person name="Brouillet S."/>
            <person name="Bruschi C.V."/>
            <person name="Caldwell B."/>
            <person name="Capuano V."/>
            <person name="Carter N.M."/>
            <person name="Choi S.-K."/>
            <person name="Codani J.-J."/>
            <person name="Connerton I.F."/>
            <person name="Cummings N.J."/>
            <person name="Daniel R.A."/>
            <person name="Denizot F."/>
            <person name="Devine K.M."/>
            <person name="Duesterhoeft A."/>
            <person name="Ehrlich S.D."/>
            <person name="Emmerson P.T."/>
            <person name="Entian K.-D."/>
            <person name="Errington J."/>
            <person name="Fabret C."/>
            <person name="Ferrari E."/>
            <person name="Foulger D."/>
            <person name="Fritz C."/>
            <person name="Fujita M."/>
            <person name="Fujita Y."/>
            <person name="Fuma S."/>
            <person name="Galizzi A."/>
            <person name="Galleron N."/>
            <person name="Ghim S.-Y."/>
            <person name="Glaser P."/>
            <person name="Goffeau A."/>
            <person name="Golightly E.J."/>
            <person name="Grandi G."/>
            <person name="Guiseppi G."/>
            <person name="Guy B.J."/>
            <person name="Haga K."/>
            <person name="Haiech J."/>
            <person name="Harwood C.R."/>
            <person name="Henaut A."/>
            <person name="Hilbert H."/>
            <person name="Holsappel S."/>
            <person name="Hosono S."/>
            <person name="Hullo M.-F."/>
            <person name="Itaya M."/>
            <person name="Jones L.-M."/>
            <person name="Joris B."/>
            <person name="Karamata D."/>
            <person name="Kasahara Y."/>
            <person name="Klaerr-Blanchard M."/>
            <person name="Klein C."/>
            <person name="Kobayashi Y."/>
            <person name="Koetter P."/>
            <person name="Koningstein G."/>
            <person name="Krogh S."/>
            <person name="Kumano M."/>
            <person name="Kurita K."/>
            <person name="Lapidus A."/>
            <person name="Lardinois S."/>
            <person name="Lauber J."/>
            <person name="Lazarevic V."/>
            <person name="Lee S.-M."/>
            <person name="Levine A."/>
            <person name="Liu H."/>
            <person name="Masuda S."/>
            <person name="Mauel C."/>
            <person name="Medigue C."/>
            <person name="Medina N."/>
            <person name="Mellado R.P."/>
            <person name="Mizuno M."/>
            <person name="Moestl D."/>
            <person name="Nakai S."/>
            <person name="Noback M."/>
            <person name="Noone D."/>
            <person name="O'Reilly M."/>
            <person name="Ogawa K."/>
            <person name="Ogiwara A."/>
            <person name="Oudega B."/>
            <person name="Park S.-H."/>
            <person name="Parro V."/>
            <person name="Pohl T.M."/>
            <person name="Portetelle D."/>
            <person name="Porwollik S."/>
            <person name="Prescott A.M."/>
            <person name="Presecan E."/>
            <person name="Pujic P."/>
            <person name="Purnelle B."/>
            <person name="Rapoport G."/>
            <person name="Rey M."/>
            <person name="Reynolds S."/>
            <person name="Rieger M."/>
            <person name="Rivolta C."/>
            <person name="Rocha E."/>
            <person name="Roche B."/>
            <person name="Rose M."/>
            <person name="Sadaie Y."/>
            <person name="Sato T."/>
            <person name="Scanlan E."/>
            <person name="Schleich S."/>
            <person name="Schroeter R."/>
            <person name="Scoffone F."/>
            <person name="Sekiguchi J."/>
            <person name="Sekowska A."/>
            <person name="Seror S.J."/>
            <person name="Serror P."/>
            <person name="Shin B.-S."/>
            <person name="Soldo B."/>
            <person name="Sorokin A."/>
            <person name="Tacconi E."/>
            <person name="Takagi T."/>
            <person name="Takahashi H."/>
            <person name="Takemaru K."/>
            <person name="Takeuchi M."/>
            <person name="Tamakoshi A."/>
            <person name="Tanaka T."/>
            <person name="Terpstra P."/>
            <person name="Tognoni A."/>
            <person name="Tosato V."/>
            <person name="Uchiyama S."/>
            <person name="Vandenbol M."/>
            <person name="Vannier F."/>
            <person name="Vassarotti A."/>
            <person name="Viari A."/>
            <person name="Wambutt R."/>
            <person name="Wedler E."/>
            <person name="Wedler H."/>
            <person name="Weitzenegger T."/>
            <person name="Winters P."/>
            <person name="Wipat A."/>
            <person name="Yamamoto H."/>
            <person name="Yamane K."/>
            <person name="Yasumoto K."/>
            <person name="Yata K."/>
            <person name="Yoshida K."/>
            <person name="Yoshikawa H.-F."/>
            <person name="Zumstein E."/>
            <person name="Yoshikawa H."/>
            <person name="Danchin A."/>
        </authorList>
    </citation>
    <scope>NUCLEOTIDE SEQUENCE [LARGE SCALE GENOMIC DNA]</scope>
    <source>
        <strain>168</strain>
    </source>
</reference>
<feature type="chain" id="PRO_0000050024" description="Uncharacterized protein YxiF">
    <location>
        <begin position="1"/>
        <end position="156"/>
    </location>
</feature>
<accession>P42298</accession>
<dbReference type="EMBL" id="D31856">
    <property type="protein sequence ID" value="BAA06658.1"/>
    <property type="molecule type" value="Genomic_DNA"/>
</dbReference>
<dbReference type="EMBL" id="D83026">
    <property type="protein sequence ID" value="BAA11685.1"/>
    <property type="molecule type" value="Genomic_DNA"/>
</dbReference>
<dbReference type="EMBL" id="D29985">
    <property type="protein sequence ID" value="BAA06262.1"/>
    <property type="molecule type" value="Genomic_DNA"/>
</dbReference>
<dbReference type="EMBL" id="AL009126">
    <property type="protein sequence ID" value="CAB15957.1"/>
    <property type="molecule type" value="Genomic_DNA"/>
</dbReference>
<dbReference type="PIR" id="B70077">
    <property type="entry name" value="B70077"/>
</dbReference>
<dbReference type="RefSeq" id="NP_391800.1">
    <property type="nucleotide sequence ID" value="NC_000964.3"/>
</dbReference>
<dbReference type="RefSeq" id="WP_003243092.1">
    <property type="nucleotide sequence ID" value="NZ_OZ025638.1"/>
</dbReference>
<dbReference type="FunCoup" id="P42298">
    <property type="interactions" value="24"/>
</dbReference>
<dbReference type="STRING" id="224308.BSU39210"/>
<dbReference type="PaxDb" id="224308-BSU39210"/>
<dbReference type="EnsemblBacteria" id="CAB15957">
    <property type="protein sequence ID" value="CAB15957"/>
    <property type="gene ID" value="BSU_39210"/>
</dbReference>
<dbReference type="GeneID" id="937519"/>
<dbReference type="KEGG" id="bsu:BSU39210"/>
<dbReference type="PATRIC" id="fig|224308.179.peg.4245"/>
<dbReference type="eggNOG" id="ENOG5030DKA">
    <property type="taxonomic scope" value="Bacteria"/>
</dbReference>
<dbReference type="InParanoid" id="P42298"/>
<dbReference type="OrthoDB" id="2907061at2"/>
<dbReference type="BioCyc" id="BSUB:BSU39210-MONOMER"/>
<dbReference type="Proteomes" id="UP000001570">
    <property type="component" value="Chromosome"/>
</dbReference>
<dbReference type="Pfam" id="PF24715">
    <property type="entry name" value="YxiF"/>
    <property type="match status" value="1"/>
</dbReference>